<name>MLR_SPISA</name>
<sequence>SDDKKAKAATSSVLTKFTQNQIQEMKEAFTMIDQNRDGLIDVSDLKEMYSNLGTAPQDSVLQAMVKEAPQMNFTGFLSLFSEKMSGTDPEETLRNAFQMFDSDNTGYIPEEYMKDLLENMGDNFSKDEVRQTWKEAPIAGGKVDYNAFVSKIKGKEQDDA</sequence>
<dbReference type="PIR" id="A41455">
    <property type="entry name" value="A41455"/>
</dbReference>
<dbReference type="SMR" id="P08051"/>
<dbReference type="GO" id="GO:0016459">
    <property type="term" value="C:myosin complex"/>
    <property type="evidence" value="ECO:0007669"/>
    <property type="project" value="UniProtKB-KW"/>
</dbReference>
<dbReference type="GO" id="GO:0005509">
    <property type="term" value="F:calcium ion binding"/>
    <property type="evidence" value="ECO:0007669"/>
    <property type="project" value="InterPro"/>
</dbReference>
<dbReference type="FunFam" id="1.10.238.10:FF:000007">
    <property type="entry name" value="Putative myosin regulatory light chain sqh"/>
    <property type="match status" value="1"/>
</dbReference>
<dbReference type="Gene3D" id="1.10.238.10">
    <property type="entry name" value="EF-hand"/>
    <property type="match status" value="2"/>
</dbReference>
<dbReference type="InterPro" id="IPR011992">
    <property type="entry name" value="EF-hand-dom_pair"/>
</dbReference>
<dbReference type="InterPro" id="IPR018247">
    <property type="entry name" value="EF_Hand_1_Ca_BS"/>
</dbReference>
<dbReference type="InterPro" id="IPR002048">
    <property type="entry name" value="EF_hand_dom"/>
</dbReference>
<dbReference type="InterPro" id="IPR050403">
    <property type="entry name" value="Myosin_RLC"/>
</dbReference>
<dbReference type="PANTHER" id="PTHR23049">
    <property type="entry name" value="MYOSIN REGULATORY LIGHT CHAIN 2"/>
    <property type="match status" value="1"/>
</dbReference>
<dbReference type="Pfam" id="PF13499">
    <property type="entry name" value="EF-hand_7"/>
    <property type="match status" value="2"/>
</dbReference>
<dbReference type="SMART" id="SM00054">
    <property type="entry name" value="EFh"/>
    <property type="match status" value="2"/>
</dbReference>
<dbReference type="SUPFAM" id="SSF47473">
    <property type="entry name" value="EF-hand"/>
    <property type="match status" value="1"/>
</dbReference>
<dbReference type="PROSITE" id="PS00018">
    <property type="entry name" value="EF_HAND_1"/>
    <property type="match status" value="1"/>
</dbReference>
<dbReference type="PROSITE" id="PS50222">
    <property type="entry name" value="EF_HAND_2"/>
    <property type="match status" value="2"/>
</dbReference>
<proteinExistence type="evidence at protein level"/>
<feature type="chain" id="PRO_0000198749" description="Myosin regulatory light chain, smooth muscle">
    <location>
        <begin position="1"/>
        <end position="160"/>
    </location>
</feature>
<feature type="domain" description="EF-hand 1" evidence="2">
    <location>
        <begin position="20"/>
        <end position="55"/>
    </location>
</feature>
<feature type="domain" description="EF-hand 2" evidence="2">
    <location>
        <begin position="88"/>
        <end position="123"/>
    </location>
</feature>
<feature type="binding site" evidence="2">
    <location>
        <position position="33"/>
    </location>
    <ligand>
        <name>Ca(2+)</name>
        <dbReference type="ChEBI" id="CHEBI:29108"/>
    </ligand>
</feature>
<feature type="binding site" evidence="2">
    <location>
        <position position="35"/>
    </location>
    <ligand>
        <name>Ca(2+)</name>
        <dbReference type="ChEBI" id="CHEBI:29108"/>
    </ligand>
</feature>
<feature type="binding site" evidence="2">
    <location>
        <position position="37"/>
    </location>
    <ligand>
        <name>Ca(2+)</name>
        <dbReference type="ChEBI" id="CHEBI:29108"/>
    </ligand>
</feature>
<feature type="binding site" evidence="2">
    <location>
        <position position="44"/>
    </location>
    <ligand>
        <name>Ca(2+)</name>
        <dbReference type="ChEBI" id="CHEBI:29108"/>
    </ligand>
</feature>
<feature type="modified residue" description="Blocked amino end (Ser)">
    <location>
        <position position="1"/>
    </location>
</feature>
<feature type="modified residue" description="Phosphoserine" evidence="1">
    <location>
        <position position="11"/>
    </location>
</feature>
<keyword id="KW-0106">Calcium</keyword>
<keyword id="KW-0903">Direct protein sequencing</keyword>
<keyword id="KW-0479">Metal-binding</keyword>
<keyword id="KW-0505">Motor protein</keyword>
<keyword id="KW-0514">Muscle protein</keyword>
<keyword id="KW-0518">Myosin</keyword>
<keyword id="KW-0597">Phosphoprotein</keyword>
<keyword id="KW-0677">Repeat</keyword>
<reference key="1">
    <citation type="journal article" date="1988" name="J. Biochem.">
        <title>Amino acid sequence of the regulatory light chain of clam foot muscle myosin.</title>
        <authorList>
            <person name="Tanaka H."/>
            <person name="Maita T."/>
            <person name="Ojima T."/>
            <person name="Nishita K."/>
            <person name="Matsuda G."/>
        </authorList>
    </citation>
    <scope>PROTEIN SEQUENCE</scope>
</reference>
<evidence type="ECO:0000255" key="1"/>
<evidence type="ECO:0000255" key="2">
    <source>
        <dbReference type="PROSITE-ProRule" id="PRU00448"/>
    </source>
</evidence>
<protein>
    <recommendedName>
        <fullName>Myosin regulatory light chain, smooth muscle</fullName>
    </recommendedName>
</protein>
<comment type="function">
    <text>In molluscan muscle, calcium regulation is associated with myosin rather than with actin. Muscle myosin contains two types of light chains: the catalytic light chain, essential for ATPase activity, and the regulatory light chain, a calcium-binding protein responsible for Ca(2+) dependent binding and Ca(2+) dependent Mg-ATPase activity.</text>
</comment>
<comment type="miscellaneous">
    <text>This chain binds calcium.</text>
</comment>
<organism>
    <name type="scientific">Spisula sachalinensis</name>
    <name type="common">Sakhalin surf-clam</name>
    <name type="synonym">Pseudocardium sachalinense</name>
    <dbReference type="NCBI Taxonomy" id="81899"/>
    <lineage>
        <taxon>Eukaryota</taxon>
        <taxon>Metazoa</taxon>
        <taxon>Spiralia</taxon>
        <taxon>Lophotrochozoa</taxon>
        <taxon>Mollusca</taxon>
        <taxon>Bivalvia</taxon>
        <taxon>Autobranchia</taxon>
        <taxon>Heteroconchia</taxon>
        <taxon>Euheterodonta</taxon>
        <taxon>Imparidentia</taxon>
        <taxon>Neoheterodontei</taxon>
        <taxon>Venerida</taxon>
        <taxon>Mactroidea</taxon>
        <taxon>Mactridae</taxon>
        <taxon>Pseudocardium</taxon>
    </lineage>
</organism>
<accession>P08051</accession>